<dbReference type="EC" id="4.2.1.9" evidence="1"/>
<dbReference type="EMBL" id="CP001186">
    <property type="protein sequence ID" value="ACK94282.1"/>
    <property type="molecule type" value="Genomic_DNA"/>
</dbReference>
<dbReference type="RefSeq" id="WP_001255811.1">
    <property type="nucleotide sequence ID" value="NC_011772.1"/>
</dbReference>
<dbReference type="SMR" id="B7IS44"/>
<dbReference type="KEGG" id="bcg:BCG9842_B3488"/>
<dbReference type="HOGENOM" id="CLU_014271_4_2_9"/>
<dbReference type="UniPathway" id="UPA00047">
    <property type="reaction ID" value="UER00057"/>
</dbReference>
<dbReference type="UniPathway" id="UPA00049">
    <property type="reaction ID" value="UER00061"/>
</dbReference>
<dbReference type="Proteomes" id="UP000006744">
    <property type="component" value="Chromosome"/>
</dbReference>
<dbReference type="GO" id="GO:0005829">
    <property type="term" value="C:cytosol"/>
    <property type="evidence" value="ECO:0007669"/>
    <property type="project" value="TreeGrafter"/>
</dbReference>
<dbReference type="GO" id="GO:0051537">
    <property type="term" value="F:2 iron, 2 sulfur cluster binding"/>
    <property type="evidence" value="ECO:0007669"/>
    <property type="project" value="UniProtKB-UniRule"/>
</dbReference>
<dbReference type="GO" id="GO:0004160">
    <property type="term" value="F:dihydroxy-acid dehydratase activity"/>
    <property type="evidence" value="ECO:0007669"/>
    <property type="project" value="UniProtKB-UniRule"/>
</dbReference>
<dbReference type="GO" id="GO:0000287">
    <property type="term" value="F:magnesium ion binding"/>
    <property type="evidence" value="ECO:0007669"/>
    <property type="project" value="UniProtKB-UniRule"/>
</dbReference>
<dbReference type="GO" id="GO:0009097">
    <property type="term" value="P:isoleucine biosynthetic process"/>
    <property type="evidence" value="ECO:0007669"/>
    <property type="project" value="UniProtKB-UniRule"/>
</dbReference>
<dbReference type="GO" id="GO:0009099">
    <property type="term" value="P:L-valine biosynthetic process"/>
    <property type="evidence" value="ECO:0007669"/>
    <property type="project" value="UniProtKB-UniRule"/>
</dbReference>
<dbReference type="FunFam" id="3.50.30.80:FF:000001">
    <property type="entry name" value="Dihydroxy-acid dehydratase"/>
    <property type="match status" value="1"/>
</dbReference>
<dbReference type="Gene3D" id="3.50.30.80">
    <property type="entry name" value="IlvD/EDD C-terminal domain-like"/>
    <property type="match status" value="1"/>
</dbReference>
<dbReference type="HAMAP" id="MF_00012">
    <property type="entry name" value="IlvD"/>
    <property type="match status" value="1"/>
</dbReference>
<dbReference type="InterPro" id="IPR042096">
    <property type="entry name" value="Dihydro-acid_dehy_C"/>
</dbReference>
<dbReference type="InterPro" id="IPR004404">
    <property type="entry name" value="DihydroxyA_deHydtase"/>
</dbReference>
<dbReference type="InterPro" id="IPR020558">
    <property type="entry name" value="DiOHA_6PGluconate_deHydtase_CS"/>
</dbReference>
<dbReference type="InterPro" id="IPR056740">
    <property type="entry name" value="ILV_EDD_C"/>
</dbReference>
<dbReference type="InterPro" id="IPR000581">
    <property type="entry name" value="ILV_EDD_N"/>
</dbReference>
<dbReference type="InterPro" id="IPR037237">
    <property type="entry name" value="IlvD/EDD_N"/>
</dbReference>
<dbReference type="NCBIfam" id="TIGR00110">
    <property type="entry name" value="ilvD"/>
    <property type="match status" value="1"/>
</dbReference>
<dbReference type="NCBIfam" id="NF002068">
    <property type="entry name" value="PRK00911.1"/>
    <property type="match status" value="1"/>
</dbReference>
<dbReference type="PANTHER" id="PTHR43661">
    <property type="entry name" value="D-XYLONATE DEHYDRATASE"/>
    <property type="match status" value="1"/>
</dbReference>
<dbReference type="PANTHER" id="PTHR43661:SF3">
    <property type="entry name" value="D-XYLONATE DEHYDRATASE YAGF-RELATED"/>
    <property type="match status" value="1"/>
</dbReference>
<dbReference type="Pfam" id="PF24877">
    <property type="entry name" value="ILV_EDD_C"/>
    <property type="match status" value="1"/>
</dbReference>
<dbReference type="Pfam" id="PF00920">
    <property type="entry name" value="ILVD_EDD_N"/>
    <property type="match status" value="1"/>
</dbReference>
<dbReference type="SUPFAM" id="SSF143975">
    <property type="entry name" value="IlvD/EDD N-terminal domain-like"/>
    <property type="match status" value="1"/>
</dbReference>
<dbReference type="SUPFAM" id="SSF52016">
    <property type="entry name" value="LeuD/IlvD-like"/>
    <property type="match status" value="1"/>
</dbReference>
<dbReference type="PROSITE" id="PS00886">
    <property type="entry name" value="ILVD_EDD_1"/>
    <property type="match status" value="1"/>
</dbReference>
<dbReference type="PROSITE" id="PS00887">
    <property type="entry name" value="ILVD_EDD_2"/>
    <property type="match status" value="1"/>
</dbReference>
<organism>
    <name type="scientific">Bacillus cereus (strain G9842)</name>
    <dbReference type="NCBI Taxonomy" id="405531"/>
    <lineage>
        <taxon>Bacteria</taxon>
        <taxon>Bacillati</taxon>
        <taxon>Bacillota</taxon>
        <taxon>Bacilli</taxon>
        <taxon>Bacillales</taxon>
        <taxon>Bacillaceae</taxon>
        <taxon>Bacillus</taxon>
        <taxon>Bacillus cereus group</taxon>
    </lineage>
</organism>
<keyword id="KW-0001">2Fe-2S</keyword>
<keyword id="KW-0028">Amino-acid biosynthesis</keyword>
<keyword id="KW-0100">Branched-chain amino acid biosynthesis</keyword>
<keyword id="KW-0408">Iron</keyword>
<keyword id="KW-0411">Iron-sulfur</keyword>
<keyword id="KW-0456">Lyase</keyword>
<keyword id="KW-0460">Magnesium</keyword>
<keyword id="KW-0479">Metal-binding</keyword>
<proteinExistence type="inferred from homology"/>
<name>ILVD_BACC2</name>
<evidence type="ECO:0000255" key="1">
    <source>
        <dbReference type="HAMAP-Rule" id="MF_00012"/>
    </source>
</evidence>
<feature type="chain" id="PRO_1000190649" description="Dihydroxy-acid dehydratase">
    <location>
        <begin position="1"/>
        <end position="557"/>
    </location>
</feature>
<feature type="active site" description="Proton acceptor" evidence="1">
    <location>
        <position position="468"/>
    </location>
</feature>
<feature type="binding site" evidence="1">
    <location>
        <position position="78"/>
    </location>
    <ligand>
        <name>Mg(2+)</name>
        <dbReference type="ChEBI" id="CHEBI:18420"/>
    </ligand>
</feature>
<feature type="binding site" evidence="1">
    <location>
        <position position="119"/>
    </location>
    <ligand>
        <name>[2Fe-2S] cluster</name>
        <dbReference type="ChEBI" id="CHEBI:190135"/>
    </ligand>
</feature>
<feature type="binding site" evidence="1">
    <location>
        <position position="120"/>
    </location>
    <ligand>
        <name>Mg(2+)</name>
        <dbReference type="ChEBI" id="CHEBI:18420"/>
    </ligand>
</feature>
<feature type="binding site" description="via carbamate group" evidence="1">
    <location>
        <position position="121"/>
    </location>
    <ligand>
        <name>Mg(2+)</name>
        <dbReference type="ChEBI" id="CHEBI:18420"/>
    </ligand>
</feature>
<feature type="binding site" evidence="1">
    <location>
        <position position="192"/>
    </location>
    <ligand>
        <name>[2Fe-2S] cluster</name>
        <dbReference type="ChEBI" id="CHEBI:190135"/>
    </ligand>
</feature>
<feature type="binding site" evidence="1">
    <location>
        <position position="442"/>
    </location>
    <ligand>
        <name>Mg(2+)</name>
        <dbReference type="ChEBI" id="CHEBI:18420"/>
    </ligand>
</feature>
<feature type="modified residue" description="N6-carboxylysine" evidence="1">
    <location>
        <position position="121"/>
    </location>
</feature>
<reference key="1">
    <citation type="submission" date="2008-10" db="EMBL/GenBank/DDBJ databases">
        <title>Genome sequence of Bacillus cereus G9842.</title>
        <authorList>
            <person name="Dodson R.J."/>
            <person name="Durkin A.S."/>
            <person name="Rosovitz M.J."/>
            <person name="Rasko D.A."/>
            <person name="Hoffmaster A."/>
            <person name="Ravel J."/>
            <person name="Sutton G."/>
        </authorList>
    </citation>
    <scope>NUCLEOTIDE SEQUENCE [LARGE SCALE GENOMIC DNA]</scope>
    <source>
        <strain>G9842</strain>
    </source>
</reference>
<protein>
    <recommendedName>
        <fullName evidence="1">Dihydroxy-acid dehydratase</fullName>
        <shortName evidence="1">DAD</shortName>
        <ecNumber evidence="1">4.2.1.9</ecNumber>
    </recommendedName>
</protein>
<gene>
    <name evidence="1" type="primary">ilvD</name>
    <name type="ordered locus">BCG9842_B3488</name>
</gene>
<accession>B7IS44</accession>
<comment type="function">
    <text evidence="1">Functions in the biosynthesis of branched-chain amino acids. Catalyzes the dehydration of (2R,3R)-2,3-dihydroxy-3-methylpentanoate (2,3-dihydroxy-3-methylvalerate) into 2-oxo-3-methylpentanoate (2-oxo-3-methylvalerate) and of (2R)-2,3-dihydroxy-3-methylbutanoate (2,3-dihydroxyisovalerate) into 2-oxo-3-methylbutanoate (2-oxoisovalerate), the penultimate precursor to L-isoleucine and L-valine, respectively.</text>
</comment>
<comment type="catalytic activity">
    <reaction evidence="1">
        <text>(2R)-2,3-dihydroxy-3-methylbutanoate = 3-methyl-2-oxobutanoate + H2O</text>
        <dbReference type="Rhea" id="RHEA:24809"/>
        <dbReference type="ChEBI" id="CHEBI:11851"/>
        <dbReference type="ChEBI" id="CHEBI:15377"/>
        <dbReference type="ChEBI" id="CHEBI:49072"/>
        <dbReference type="EC" id="4.2.1.9"/>
    </reaction>
    <physiologicalReaction direction="left-to-right" evidence="1">
        <dbReference type="Rhea" id="RHEA:24810"/>
    </physiologicalReaction>
</comment>
<comment type="catalytic activity">
    <reaction evidence="1">
        <text>(2R,3R)-2,3-dihydroxy-3-methylpentanoate = (S)-3-methyl-2-oxopentanoate + H2O</text>
        <dbReference type="Rhea" id="RHEA:27694"/>
        <dbReference type="ChEBI" id="CHEBI:15377"/>
        <dbReference type="ChEBI" id="CHEBI:35146"/>
        <dbReference type="ChEBI" id="CHEBI:49258"/>
        <dbReference type="EC" id="4.2.1.9"/>
    </reaction>
    <physiologicalReaction direction="left-to-right" evidence="1">
        <dbReference type="Rhea" id="RHEA:27695"/>
    </physiologicalReaction>
</comment>
<comment type="cofactor">
    <cofactor evidence="1">
        <name>[2Fe-2S] cluster</name>
        <dbReference type="ChEBI" id="CHEBI:190135"/>
    </cofactor>
    <text evidence="1">Binds 1 [2Fe-2S] cluster per subunit. This cluster acts as a Lewis acid cofactor.</text>
</comment>
<comment type="cofactor">
    <cofactor evidence="1">
        <name>Mg(2+)</name>
        <dbReference type="ChEBI" id="CHEBI:18420"/>
    </cofactor>
</comment>
<comment type="pathway">
    <text evidence="1">Amino-acid biosynthesis; L-isoleucine biosynthesis; L-isoleucine from 2-oxobutanoate: step 3/4.</text>
</comment>
<comment type="pathway">
    <text evidence="1">Amino-acid biosynthesis; L-valine biosynthesis; L-valine from pyruvate: step 3/4.</text>
</comment>
<comment type="subunit">
    <text evidence="1">Homodimer.</text>
</comment>
<comment type="similarity">
    <text evidence="1">Belongs to the IlvD/Edd family.</text>
</comment>
<sequence length="557" mass="59963">MRSDMIKKGFDKAPHRSLLKATGLKDEDFDKPFIAICNSFIEIIPGHKHLNEFGKLVKEAVRAAGMVPFEFNTIGVDDGIAMGHIGMRYSLPSREIIADSVETVVNAHWFDGMICIPNCDKITPGMMMAALRINIPTVFVSGGPMAAGKTSKGEVVDLSSVFEGVGAYQSGKISEEELKDIEDHGCPSCGSCSGMFTANSMNCLCEVLGLALPGNGSILAIDPRREELIKQAAEKLKILIERDIKPRDIVTEEAIDDAFALDMAMGGSTNTVLHTLALAQEAGLDYDMNRIDAVSRRVPHLCKVSPASNWHMEDIDRAGGISAILKEISRKEGVLHLDRITATGQTLRENIAHAEIKDKEVIHSLENPHSEEGGLRILKGNLAKDGAVIKSGATEVKRFEGPCVIFNSQDEALAGIMLGKVKKGDVVVIRYEGPRGGPGMPEMLAPTSAIAGMGLGADVALLTDGRFSGASRGISVGHISPEAAAGGTIALLEQGDIVCIDVEERLLEVRVSDEELDKRKKEWKRPEAKVKTGWLGRYAQMVTSANTGAVLKIPDFD</sequence>